<protein>
    <recommendedName>
        <fullName evidence="1">tRNA N6-adenosine threonylcarbamoyltransferase</fullName>
        <ecNumber evidence="1">2.3.1.234</ecNumber>
    </recommendedName>
    <alternativeName>
        <fullName evidence="1">N6-L-threonylcarbamoyladenine synthase</fullName>
        <shortName evidence="1">t(6)A synthase</shortName>
    </alternativeName>
    <alternativeName>
        <fullName evidence="1">t(6)A37 threonylcarbamoyladenosine biosynthesis protein TsaD</fullName>
    </alternativeName>
    <alternativeName>
        <fullName evidence="1">tRNA threonylcarbamoyladenosine biosynthesis protein TsaD</fullName>
    </alternativeName>
</protein>
<keyword id="KW-0012">Acyltransferase</keyword>
<keyword id="KW-0963">Cytoplasm</keyword>
<keyword id="KW-0408">Iron</keyword>
<keyword id="KW-0479">Metal-binding</keyword>
<keyword id="KW-0808">Transferase</keyword>
<keyword id="KW-0819">tRNA processing</keyword>
<sequence>MVSNLLKVVLAIETSCDETAVAVVRSDKQVLSHKVLSQKEHVVYGGVVPEIASRAHINYLYDLTSQSIEESGCDLADIDAIAVTSGPGLIGGLIIGVMMAKAISSVTNKPIIEVNHLEAHTLLIRMFHDIDFPFLVLIISGGHCQFLIVHDVGCYQRLGSSLDDSLGEVFDKVARMLNLGYPGGPIIEQKSIMGDSKSFFLPRALINRFGCDFSFSGIKTAVRNIVVNQKYIDNDFICNISASFQDCIGDILVNRITNAIHMSQAINCKINKLVVTGGVAANHLLRNRISICVKDNNFEVLYPPTELCTDNGIMVGWAGIENLSKGYVSNLDFAPKARWPLESIKRSS</sequence>
<gene>
    <name evidence="1" type="primary">tsaD</name>
    <name type="synonym">gcp</name>
    <name type="ordered locus">Erum4060</name>
    <name type="ordered locus">ERWE_CDS_04190</name>
</gene>
<name>TSAD_EHRRW</name>
<reference key="1">
    <citation type="journal article" date="2005" name="Proc. Natl. Acad. Sci. U.S.A.">
        <title>The genome of the heartwater agent Ehrlichia ruminantium contains multiple tandem repeats of actively variable copy number.</title>
        <authorList>
            <person name="Collins N.E."/>
            <person name="Liebenberg J."/>
            <person name="de Villiers E.P."/>
            <person name="Brayton K.A."/>
            <person name="Louw E."/>
            <person name="Pretorius A."/>
            <person name="Faber F.E."/>
            <person name="van Heerden H."/>
            <person name="Josemans A."/>
            <person name="van Kleef M."/>
            <person name="Steyn H.C."/>
            <person name="van Strijp M.F."/>
            <person name="Zweygarth E."/>
            <person name="Jongejan F."/>
            <person name="Maillard J.C."/>
            <person name="Berthier D."/>
            <person name="Botha M."/>
            <person name="Joubert F."/>
            <person name="Corton C.H."/>
            <person name="Thomson N.R."/>
            <person name="Allsopp M.T."/>
            <person name="Allsopp B.A."/>
        </authorList>
    </citation>
    <scope>NUCLEOTIDE SEQUENCE [LARGE SCALE GENOMIC DNA]</scope>
    <source>
        <strain>Welgevonden</strain>
    </source>
</reference>
<reference key="2">
    <citation type="journal article" date="2006" name="J. Bacteriol.">
        <title>Comparative genomic analysis of three strains of Ehrlichia ruminantium reveals an active process of genome size plasticity.</title>
        <authorList>
            <person name="Frutos R."/>
            <person name="Viari A."/>
            <person name="Ferraz C."/>
            <person name="Morgat A."/>
            <person name="Eychenie S."/>
            <person name="Kandassamy Y."/>
            <person name="Chantal I."/>
            <person name="Bensaid A."/>
            <person name="Coissac E."/>
            <person name="Vachiery N."/>
            <person name="Demaille J."/>
            <person name="Martinez D."/>
        </authorList>
    </citation>
    <scope>NUCLEOTIDE SEQUENCE [LARGE SCALE GENOMIC DNA]</scope>
    <source>
        <strain>Welgevonden</strain>
    </source>
</reference>
<comment type="function">
    <text evidence="1">Required for the formation of a threonylcarbamoyl group on adenosine at position 37 (t(6)A37) in tRNAs that read codons beginning with adenine. Is involved in the transfer of the threonylcarbamoyl moiety of threonylcarbamoyl-AMP (TC-AMP) to the N6 group of A37, together with TsaE and TsaB. TsaD likely plays a direct catalytic role in this reaction.</text>
</comment>
<comment type="catalytic activity">
    <reaction evidence="1">
        <text>L-threonylcarbamoyladenylate + adenosine(37) in tRNA = N(6)-L-threonylcarbamoyladenosine(37) in tRNA + AMP + H(+)</text>
        <dbReference type="Rhea" id="RHEA:37059"/>
        <dbReference type="Rhea" id="RHEA-COMP:10162"/>
        <dbReference type="Rhea" id="RHEA-COMP:10163"/>
        <dbReference type="ChEBI" id="CHEBI:15378"/>
        <dbReference type="ChEBI" id="CHEBI:73682"/>
        <dbReference type="ChEBI" id="CHEBI:74411"/>
        <dbReference type="ChEBI" id="CHEBI:74418"/>
        <dbReference type="ChEBI" id="CHEBI:456215"/>
        <dbReference type="EC" id="2.3.1.234"/>
    </reaction>
</comment>
<comment type="cofactor">
    <cofactor evidence="1">
        <name>Fe(2+)</name>
        <dbReference type="ChEBI" id="CHEBI:29033"/>
    </cofactor>
    <text evidence="1">Binds 1 Fe(2+) ion per subunit.</text>
</comment>
<comment type="subcellular location">
    <subcellularLocation>
        <location evidence="1">Cytoplasm</location>
    </subcellularLocation>
</comment>
<comment type="similarity">
    <text evidence="1">Belongs to the KAE1 / TsaD family.</text>
</comment>
<feature type="chain" id="PRO_0000303355" description="tRNA N6-adenosine threonylcarbamoyltransferase">
    <location>
        <begin position="1"/>
        <end position="348"/>
    </location>
</feature>
<feature type="binding site" evidence="1">
    <location>
        <position position="116"/>
    </location>
    <ligand>
        <name>Fe cation</name>
        <dbReference type="ChEBI" id="CHEBI:24875"/>
    </ligand>
</feature>
<feature type="binding site" evidence="1">
    <location>
        <position position="120"/>
    </location>
    <ligand>
        <name>Fe cation</name>
        <dbReference type="ChEBI" id="CHEBI:24875"/>
    </ligand>
</feature>
<feature type="binding site" evidence="1">
    <location>
        <begin position="138"/>
        <end position="142"/>
    </location>
    <ligand>
        <name>substrate</name>
    </ligand>
</feature>
<feature type="binding site" evidence="1">
    <location>
        <position position="171"/>
    </location>
    <ligand>
        <name>substrate</name>
    </ligand>
</feature>
<feature type="binding site" evidence="1">
    <location>
        <position position="184"/>
    </location>
    <ligand>
        <name>substrate</name>
    </ligand>
</feature>
<feature type="binding site" evidence="1">
    <location>
        <position position="282"/>
    </location>
    <ligand>
        <name>substrate</name>
    </ligand>
</feature>
<feature type="binding site" evidence="1">
    <location>
        <position position="310"/>
    </location>
    <ligand>
        <name>Fe cation</name>
        <dbReference type="ChEBI" id="CHEBI:24875"/>
    </ligand>
</feature>
<organism>
    <name type="scientific">Ehrlichia ruminantium (strain Welgevonden)</name>
    <dbReference type="NCBI Taxonomy" id="254945"/>
    <lineage>
        <taxon>Bacteria</taxon>
        <taxon>Pseudomonadati</taxon>
        <taxon>Pseudomonadota</taxon>
        <taxon>Alphaproteobacteria</taxon>
        <taxon>Rickettsiales</taxon>
        <taxon>Anaplasmataceae</taxon>
        <taxon>Ehrlichia</taxon>
    </lineage>
</organism>
<proteinExistence type="inferred from homology"/>
<accession>Q5HBC3</accession>
<accession>Q5FEY4</accession>
<evidence type="ECO:0000255" key="1">
    <source>
        <dbReference type="HAMAP-Rule" id="MF_01445"/>
    </source>
</evidence>
<dbReference type="EC" id="2.3.1.234" evidence="1"/>
<dbReference type="EMBL" id="CR767821">
    <property type="protein sequence ID" value="CAH58128.1"/>
    <property type="molecule type" value="Genomic_DNA"/>
</dbReference>
<dbReference type="EMBL" id="CR925678">
    <property type="protein sequence ID" value="CAI26913.1"/>
    <property type="molecule type" value="Genomic_DNA"/>
</dbReference>
<dbReference type="RefSeq" id="WP_011155088.1">
    <property type="nucleotide sequence ID" value="NC_005295.2"/>
</dbReference>
<dbReference type="SMR" id="Q5HBC3"/>
<dbReference type="GeneID" id="33057997"/>
<dbReference type="KEGG" id="eru:Erum4060"/>
<dbReference type="KEGG" id="erw:ERWE_CDS_04190"/>
<dbReference type="eggNOG" id="COG0533">
    <property type="taxonomic scope" value="Bacteria"/>
</dbReference>
<dbReference type="HOGENOM" id="CLU_023208_0_2_5"/>
<dbReference type="Proteomes" id="UP000001021">
    <property type="component" value="Chromosome"/>
</dbReference>
<dbReference type="GO" id="GO:0005737">
    <property type="term" value="C:cytoplasm"/>
    <property type="evidence" value="ECO:0007669"/>
    <property type="project" value="UniProtKB-SubCell"/>
</dbReference>
<dbReference type="GO" id="GO:0005506">
    <property type="term" value="F:iron ion binding"/>
    <property type="evidence" value="ECO:0007669"/>
    <property type="project" value="UniProtKB-UniRule"/>
</dbReference>
<dbReference type="GO" id="GO:0061711">
    <property type="term" value="F:N(6)-L-threonylcarbamoyladenine synthase activity"/>
    <property type="evidence" value="ECO:0007669"/>
    <property type="project" value="UniProtKB-EC"/>
</dbReference>
<dbReference type="GO" id="GO:0002949">
    <property type="term" value="P:tRNA threonylcarbamoyladenosine modification"/>
    <property type="evidence" value="ECO:0007669"/>
    <property type="project" value="UniProtKB-UniRule"/>
</dbReference>
<dbReference type="CDD" id="cd24133">
    <property type="entry name" value="ASKHA_NBD_TsaD_bac"/>
    <property type="match status" value="1"/>
</dbReference>
<dbReference type="FunFam" id="3.30.420.40:FF:000012">
    <property type="entry name" value="tRNA N6-adenosine threonylcarbamoyltransferase"/>
    <property type="match status" value="1"/>
</dbReference>
<dbReference type="Gene3D" id="3.30.420.40">
    <property type="match status" value="2"/>
</dbReference>
<dbReference type="HAMAP" id="MF_01445">
    <property type="entry name" value="TsaD"/>
    <property type="match status" value="1"/>
</dbReference>
<dbReference type="InterPro" id="IPR043129">
    <property type="entry name" value="ATPase_NBD"/>
</dbReference>
<dbReference type="InterPro" id="IPR000905">
    <property type="entry name" value="Gcp-like_dom"/>
</dbReference>
<dbReference type="InterPro" id="IPR017861">
    <property type="entry name" value="KAE1/TsaD"/>
</dbReference>
<dbReference type="InterPro" id="IPR022450">
    <property type="entry name" value="TsaD"/>
</dbReference>
<dbReference type="NCBIfam" id="TIGR00329">
    <property type="entry name" value="gcp_kae1"/>
    <property type="match status" value="1"/>
</dbReference>
<dbReference type="NCBIfam" id="TIGR03723">
    <property type="entry name" value="T6A_TsaD_YgjD"/>
    <property type="match status" value="1"/>
</dbReference>
<dbReference type="PANTHER" id="PTHR11735">
    <property type="entry name" value="TRNA N6-ADENOSINE THREONYLCARBAMOYLTRANSFERASE"/>
    <property type="match status" value="1"/>
</dbReference>
<dbReference type="PANTHER" id="PTHR11735:SF6">
    <property type="entry name" value="TRNA N6-ADENOSINE THREONYLCARBAMOYLTRANSFERASE, MITOCHONDRIAL"/>
    <property type="match status" value="1"/>
</dbReference>
<dbReference type="Pfam" id="PF00814">
    <property type="entry name" value="TsaD"/>
    <property type="match status" value="1"/>
</dbReference>
<dbReference type="PRINTS" id="PR00789">
    <property type="entry name" value="OSIALOPTASE"/>
</dbReference>
<dbReference type="SUPFAM" id="SSF53067">
    <property type="entry name" value="Actin-like ATPase domain"/>
    <property type="match status" value="2"/>
</dbReference>